<sequence>MSPQTETKASVGFKAGVKDYKLTYYTPDYETKDTDILAAFRVTPQPGVPPEEAG</sequence>
<comment type="function">
    <text evidence="1">RuBisCO catalyzes two reactions: the carboxylation of D-ribulose 1,5-bisphosphate, the primary event in carbon dioxide fixation, as well as the oxidative fragmentation of the pentose substrate in the photorespiration process. Both reactions occur simultaneously and in competition at the same active site (By similarity).</text>
</comment>
<comment type="catalytic activity">
    <reaction>
        <text>2 (2R)-3-phosphoglycerate + 2 H(+) = D-ribulose 1,5-bisphosphate + CO2 + H2O</text>
        <dbReference type="Rhea" id="RHEA:23124"/>
        <dbReference type="ChEBI" id="CHEBI:15377"/>
        <dbReference type="ChEBI" id="CHEBI:15378"/>
        <dbReference type="ChEBI" id="CHEBI:16526"/>
        <dbReference type="ChEBI" id="CHEBI:57870"/>
        <dbReference type="ChEBI" id="CHEBI:58272"/>
        <dbReference type="EC" id="4.1.1.39"/>
    </reaction>
</comment>
<comment type="catalytic activity">
    <reaction>
        <text>D-ribulose 1,5-bisphosphate + O2 = 2-phosphoglycolate + (2R)-3-phosphoglycerate + 2 H(+)</text>
        <dbReference type="Rhea" id="RHEA:36631"/>
        <dbReference type="ChEBI" id="CHEBI:15378"/>
        <dbReference type="ChEBI" id="CHEBI:15379"/>
        <dbReference type="ChEBI" id="CHEBI:57870"/>
        <dbReference type="ChEBI" id="CHEBI:58033"/>
        <dbReference type="ChEBI" id="CHEBI:58272"/>
    </reaction>
</comment>
<comment type="subunit">
    <text evidence="1">Heterohexadecamer of 8 large chains and 8 small chains.</text>
</comment>
<comment type="subcellular location">
    <subcellularLocation>
        <location>Plastid</location>
        <location>Chloroplast</location>
    </subcellularLocation>
</comment>
<comment type="miscellaneous">
    <text evidence="1">The basic functional RuBisCO is composed of a large chain homodimer in a 'head-to-tail' conformation. In form I RuBisCO this homodimer is arranged in a barrel-like tetramer with the small subunits forming a tetrameric 'cap' on each end of the 'barrel' (By similarity).</text>
</comment>
<comment type="similarity">
    <text evidence="2">Belongs to the RuBisCO large chain family. Type I subfamily.</text>
</comment>
<name>RBL_ICAMA</name>
<proteinExistence type="inferred from homology"/>
<accession>P31190</accession>
<protein>
    <recommendedName>
        <fullName>Ribulose bisphosphate carboxylase large chain</fullName>
        <shortName>RuBisCO large subunit</shortName>
        <ecNumber>4.1.1.39</ecNumber>
    </recommendedName>
</protein>
<gene>
    <name type="primary">rbcL</name>
</gene>
<geneLocation type="chloroplast"/>
<keyword id="KW-0007">Acetylation</keyword>
<keyword id="KW-0113">Calvin cycle</keyword>
<keyword id="KW-0120">Carbon dioxide fixation</keyword>
<keyword id="KW-0150">Chloroplast</keyword>
<keyword id="KW-0456">Lyase</keyword>
<keyword id="KW-0488">Methylation</keyword>
<keyword id="KW-0503">Monooxygenase</keyword>
<keyword id="KW-0560">Oxidoreductase</keyword>
<keyword id="KW-0601">Photorespiration</keyword>
<keyword id="KW-0602">Photosynthesis</keyword>
<keyword id="KW-0934">Plastid</keyword>
<evidence type="ECO:0000250" key="1"/>
<evidence type="ECO:0000305" key="2"/>
<organism>
    <name type="scientific">Icacina mannii</name>
    <dbReference type="NCBI Taxonomy" id="4323"/>
    <lineage>
        <taxon>Eukaryota</taxon>
        <taxon>Viridiplantae</taxon>
        <taxon>Streptophyta</taxon>
        <taxon>Embryophyta</taxon>
        <taxon>Tracheophyta</taxon>
        <taxon>Spermatophyta</taxon>
        <taxon>Magnoliopsida</taxon>
        <taxon>eudicotyledons</taxon>
        <taxon>Gunneridae</taxon>
        <taxon>Pentapetalae</taxon>
        <taxon>asterids</taxon>
        <taxon>lamiids</taxon>
        <taxon>Icacinales</taxon>
        <taxon>Icacinaceae</taxon>
        <taxon>Icacina</taxon>
    </lineage>
</organism>
<reference key="1">
    <citation type="journal article" date="1994" name="Mol. Phylogenet. Evol.">
        <title>Molecular phylogeny of families related to Celastrales based on rbcL 5' flanking sequences.</title>
        <authorList>
            <person name="Savolainen V."/>
            <person name="Manen J.F."/>
            <person name="Douzery E.J.P."/>
            <person name="Spichiger R."/>
        </authorList>
    </citation>
    <scope>NUCLEOTIDE SEQUENCE [GENOMIC DNA]</scope>
    <source>
        <strain>Sample IMA3</strain>
    </source>
</reference>
<dbReference type="EC" id="4.1.1.39"/>
<dbReference type="EMBL" id="X69743">
    <property type="protein sequence ID" value="CAA49398.1"/>
    <property type="molecule type" value="Genomic_DNA"/>
</dbReference>
<dbReference type="PIR" id="S31529">
    <property type="entry name" value="S31529"/>
</dbReference>
<dbReference type="SMR" id="P31190"/>
<dbReference type="GO" id="GO:0009507">
    <property type="term" value="C:chloroplast"/>
    <property type="evidence" value="ECO:0007669"/>
    <property type="project" value="UniProtKB-SubCell"/>
</dbReference>
<dbReference type="GO" id="GO:0004497">
    <property type="term" value="F:monooxygenase activity"/>
    <property type="evidence" value="ECO:0007669"/>
    <property type="project" value="UniProtKB-KW"/>
</dbReference>
<dbReference type="GO" id="GO:0016984">
    <property type="term" value="F:ribulose-bisphosphate carboxylase activity"/>
    <property type="evidence" value="ECO:0007669"/>
    <property type="project" value="UniProtKB-EC"/>
</dbReference>
<dbReference type="GO" id="GO:0009853">
    <property type="term" value="P:photorespiration"/>
    <property type="evidence" value="ECO:0007669"/>
    <property type="project" value="UniProtKB-KW"/>
</dbReference>
<dbReference type="GO" id="GO:0019253">
    <property type="term" value="P:reductive pentose-phosphate cycle"/>
    <property type="evidence" value="ECO:0007669"/>
    <property type="project" value="UniProtKB-KW"/>
</dbReference>
<dbReference type="Gene3D" id="3.30.70.150">
    <property type="entry name" value="RuBisCO large subunit, N-terminal domain"/>
    <property type="match status" value="1"/>
</dbReference>
<dbReference type="InterPro" id="IPR033966">
    <property type="entry name" value="RuBisCO"/>
</dbReference>
<dbReference type="InterPro" id="IPR017443">
    <property type="entry name" value="RuBisCO_lsu_fd_N"/>
</dbReference>
<dbReference type="InterPro" id="IPR036422">
    <property type="entry name" value="RuBisCO_lsu_N_sf"/>
</dbReference>
<dbReference type="PANTHER" id="PTHR42704">
    <property type="entry name" value="RIBULOSE BISPHOSPHATE CARBOXYLASE"/>
    <property type="match status" value="1"/>
</dbReference>
<dbReference type="PANTHER" id="PTHR42704:SF15">
    <property type="entry name" value="RIBULOSE BISPHOSPHATE CARBOXYLASE LARGE CHAIN"/>
    <property type="match status" value="1"/>
</dbReference>
<dbReference type="Pfam" id="PF02788">
    <property type="entry name" value="RuBisCO_large_N"/>
    <property type="match status" value="1"/>
</dbReference>
<dbReference type="SUPFAM" id="SSF54966">
    <property type="entry name" value="RuBisCO, large subunit, small (N-terminal) domain"/>
    <property type="match status" value="1"/>
</dbReference>
<feature type="propeptide" id="PRO_0000031257" evidence="1">
    <location>
        <begin position="1"/>
        <end position="2"/>
    </location>
</feature>
<feature type="chain" id="PRO_0000031258" description="Ribulose bisphosphate carboxylase large chain">
    <location>
        <begin position="3"/>
        <end position="54" status="greater than"/>
    </location>
</feature>
<feature type="modified residue" description="N-acetylproline" evidence="1">
    <location>
        <position position="3"/>
    </location>
</feature>
<feature type="modified residue" description="N6,N6,N6-trimethyllysine" evidence="1">
    <location>
        <position position="14"/>
    </location>
</feature>
<feature type="non-terminal residue">
    <location>
        <position position="54"/>
    </location>
</feature>